<comment type="function">
    <text evidence="1 2">Plays a key role in glycolysis by catalyzing the cleavage of fructose 1,6-bisphosphate into dihydroxyacetone phosphate and glyceraldehyde 3-phosphate (PubMed:17166851). Does not cleave D-tagatose-1,6-bisphosphate (PubMed:17166851, PubMed:19236002).</text>
</comment>
<comment type="catalytic activity">
    <reaction evidence="1 2 3 4">
        <text>beta-D-fructose 1,6-bisphosphate = D-glyceraldehyde 3-phosphate + dihydroxyacetone phosphate</text>
        <dbReference type="Rhea" id="RHEA:14729"/>
        <dbReference type="ChEBI" id="CHEBI:32966"/>
        <dbReference type="ChEBI" id="CHEBI:57642"/>
        <dbReference type="ChEBI" id="CHEBI:59776"/>
        <dbReference type="EC" id="4.1.2.13"/>
    </reaction>
    <physiologicalReaction direction="left-to-right" evidence="1 2 3 4">
        <dbReference type="Rhea" id="RHEA:14730"/>
    </physiologicalReaction>
</comment>
<comment type="cofactor">
    <cofactor evidence="1">
        <name>Zn(2+)</name>
        <dbReference type="ChEBI" id="CHEBI:29105"/>
    </cofactor>
    <text evidence="1 2 3">Binds 1 Zn(2+) ion per subunit.</text>
</comment>
<comment type="biophysicochemical properties">
    <kinetics>
        <KM evidence="1">1.7 uM for fructose 1,6-bisphosphate (at pH 7.5 and 25 degrees Celsius)</KM>
        <KM evidence="4">1.8 uM for fructose 1,6-bisphosphate</KM>
        <text evidence="1 4">kcat is 3.55 sec(-1) with fructose 1,6-bisphosphate as substrate (at pH 7.5 and 25 degrees Celsius) (PubMed:17166851). kcat is 4.3 sec(-1) with fructose 1,6-bisphosphate as substrate (PubMed:31409864).</text>
    </kinetics>
    <phDependence>
        <text evidence="1">Optimum pH is 7.5.</text>
    </phDependence>
</comment>
<comment type="pathway">
    <text evidence="8">Carbohydrate degradation; glycolysis; D-glyceraldehyde 3-phosphate and glycerone phosphate from D-glucose: step 4/4.</text>
</comment>
<comment type="subunit">
    <text evidence="1">Homodimer.</text>
</comment>
<comment type="developmental stage">
    <text evidence="1">Expressed in trophozoites (at protein level).</text>
</comment>
<comment type="disruption phenotype">
    <text evidence="1">RNAi-mediated knockdown is lethal.</text>
</comment>
<comment type="similarity">
    <text evidence="7">Belongs to the class II fructose-bisphosphate aldolase family.</text>
</comment>
<keyword id="KW-0002">3D-structure</keyword>
<keyword id="KW-0324">Glycolysis</keyword>
<keyword id="KW-0456">Lyase</keyword>
<keyword id="KW-0479">Metal-binding</keyword>
<keyword id="KW-1185">Reference proteome</keyword>
<keyword id="KW-0862">Zinc</keyword>
<protein>
    <recommendedName>
        <fullName evidence="7">Fructose-bisphosphate aldolase</fullName>
        <shortName evidence="6">Glfba</shortName>
        <shortName evidence="5">glFBPA</shortName>
        <ecNumber evidence="1 2 3 4">4.1.2.13</ecNumber>
    </recommendedName>
    <alternativeName>
        <fullName evidence="6">Fructose-1,6-bisphosphate aldolase</fullName>
    </alternativeName>
</protein>
<feature type="chain" id="PRO_0000457933" description="Fructose-bisphosphate aldolase">
    <location>
        <begin position="1"/>
        <end position="323"/>
    </location>
</feature>
<feature type="active site" description="Proton donor" evidence="2 8">
    <location>
        <position position="83"/>
    </location>
</feature>
<feature type="binding site" evidence="2 16 17">
    <location>
        <position position="50"/>
    </location>
    <ligand>
        <name>beta-D-fructose 1,6-bisphosphate</name>
        <dbReference type="ChEBI" id="CHEBI:32966"/>
    </ligand>
</feature>
<feature type="binding site" evidence="1 2 3 13 14 15 16 17 18">
    <location>
        <position position="84"/>
    </location>
    <ligand>
        <name>Zn(2+)</name>
        <dbReference type="ChEBI" id="CHEBI:29105"/>
        <note>catalytic</note>
    </ligand>
</feature>
<feature type="binding site" evidence="2 16 17">
    <location>
        <position position="178"/>
    </location>
    <ligand>
        <name>beta-D-fructose 1,6-bisphosphate</name>
        <dbReference type="ChEBI" id="CHEBI:32966"/>
    </ligand>
</feature>
<feature type="binding site" evidence="1 2 3 13 14 15 16 17 18">
    <location>
        <position position="178"/>
    </location>
    <ligand>
        <name>Zn(2+)</name>
        <dbReference type="ChEBI" id="CHEBI:29105"/>
        <note>catalytic</note>
    </ligand>
</feature>
<feature type="binding site" evidence="2 16 17">
    <location>
        <position position="179"/>
    </location>
    <ligand>
        <name>beta-D-fructose 1,6-bisphosphate</name>
        <dbReference type="ChEBI" id="CHEBI:32966"/>
    </ligand>
</feature>
<feature type="binding site" evidence="2 16 17">
    <location>
        <position position="182"/>
    </location>
    <ligand>
        <name>beta-D-fructose 1,6-bisphosphate</name>
        <dbReference type="ChEBI" id="CHEBI:32966"/>
    </ligand>
</feature>
<feature type="binding site" evidence="1 2 3 13 14 15 16 17 18">
    <location>
        <position position="210"/>
    </location>
    <ligand>
        <name>Zn(2+)</name>
        <dbReference type="ChEBI" id="CHEBI:29105"/>
        <note>catalytic</note>
    </ligand>
</feature>
<feature type="binding site" evidence="2 16 17">
    <location>
        <position position="211"/>
    </location>
    <ligand>
        <name>beta-D-fructose 1,6-bisphosphate</name>
        <dbReference type="ChEBI" id="CHEBI:32966"/>
    </ligand>
</feature>
<feature type="binding site" evidence="2 16 17">
    <location>
        <position position="213"/>
    </location>
    <ligand>
        <name>beta-D-fructose 1,6-bisphosphate</name>
        <dbReference type="ChEBI" id="CHEBI:32966"/>
    </ligand>
</feature>
<feature type="binding site" evidence="2 16 17">
    <location>
        <position position="253"/>
    </location>
    <ligand>
        <name>beta-D-fructose 1,6-bisphosphate</name>
        <dbReference type="ChEBI" id="CHEBI:32966"/>
    </ligand>
</feature>
<feature type="binding site" evidence="2 16 17">
    <location>
        <position position="255"/>
    </location>
    <ligand>
        <name>beta-D-fructose 1,6-bisphosphate</name>
        <dbReference type="ChEBI" id="CHEBI:32966"/>
    </ligand>
</feature>
<feature type="binding site" evidence="2 16 17">
    <location>
        <position position="256"/>
    </location>
    <ligand>
        <name>beta-D-fructose 1,6-bisphosphate</name>
        <dbReference type="ChEBI" id="CHEBI:32966"/>
    </ligand>
</feature>
<feature type="binding site" evidence="2 16 17">
    <location>
        <position position="259"/>
    </location>
    <ligand>
        <name>beta-D-fructose 1,6-bisphosphate</name>
        <dbReference type="ChEBI" id="CHEBI:32966"/>
    </ligand>
</feature>
<feature type="binding site" evidence="2 16 17">
    <location>
        <position position="280"/>
    </location>
    <ligand>
        <name>beta-D-fructose 1,6-bisphosphate</name>
        <dbReference type="ChEBI" id="CHEBI:32966"/>
    </ligand>
</feature>
<feature type="mutagenesis site" description="Severe loss of catalytic activity." evidence="1">
    <original>D</original>
    <variation>A</variation>
    <location>
        <position position="83"/>
    </location>
</feature>
<feature type="mutagenesis site" description="9.4-fold reduction in substrate affinity and 50-fold reduction in catalytic affinity. Has some activity towards tagatose-1,6-bisphosphate." evidence="2">
    <original>D</original>
    <variation>A</variation>
    <location>
        <position position="255"/>
    </location>
</feature>
<feature type="mutagenesis site" description="1.8-fold reduction in substrate affinity and 2.8-fold reduction in catalytic efficiency. 6-fold reduction in substrate affinity and 24-fold reduction in catalytic efficiency; when associated with A-278." evidence="4">
    <original>R</original>
    <variation>A</variation>
    <location>
        <position position="259"/>
    </location>
</feature>
<feature type="mutagenesis site" description="159-fold reduction in substrate affinity and 2770-fold reduction in catalytic efficiency. 6-fold reduction in substrate affinity and 24-fold reduction in catalytic efficiency; when associated with A-259." evidence="4">
    <original>D</original>
    <variation>A</variation>
    <location>
        <position position="278"/>
    </location>
</feature>
<feature type="sequence conflict" description="In Ref. 1; AAD05239." evidence="7" ref="1">
    <original>G</original>
    <variation>S</variation>
    <location>
        <position position="129"/>
    </location>
</feature>
<feature type="helix" evidence="19">
    <location>
        <begin position="6"/>
        <end position="15"/>
    </location>
</feature>
<feature type="strand" evidence="19">
    <location>
        <begin position="20"/>
        <end position="24"/>
    </location>
</feature>
<feature type="helix" evidence="19">
    <location>
        <begin position="28"/>
        <end position="40"/>
    </location>
</feature>
<feature type="strand" evidence="19">
    <location>
        <begin position="45"/>
        <end position="50"/>
    </location>
</feature>
<feature type="helix" evidence="19">
    <location>
        <begin position="51"/>
        <end position="56"/>
    </location>
</feature>
<feature type="turn" evidence="19">
    <location>
        <begin position="57"/>
        <end position="59"/>
    </location>
</feature>
<feature type="helix" evidence="19">
    <location>
        <begin position="60"/>
        <end position="72"/>
    </location>
</feature>
<feature type="strand" evidence="19">
    <location>
        <begin position="78"/>
        <end position="85"/>
    </location>
</feature>
<feature type="helix" evidence="19">
    <location>
        <begin position="88"/>
        <end position="96"/>
    </location>
</feature>
<feature type="strand" evidence="19">
    <location>
        <begin position="100"/>
        <end position="104"/>
    </location>
</feature>
<feature type="helix" evidence="19">
    <location>
        <begin position="111"/>
        <end position="126"/>
    </location>
</feature>
<feature type="turn" evidence="19">
    <location>
        <begin position="127"/>
        <end position="129"/>
    </location>
</feature>
<feature type="strand" evidence="19">
    <location>
        <begin position="131"/>
        <end position="137"/>
    </location>
</feature>
<feature type="helix" evidence="19">
    <location>
        <begin position="155"/>
        <end position="165"/>
    </location>
</feature>
<feature type="strand" evidence="19">
    <location>
        <begin position="168"/>
        <end position="172"/>
    </location>
</feature>
<feature type="strand" evidence="19">
    <location>
        <begin position="178"/>
        <end position="181"/>
    </location>
</feature>
<feature type="strand" evidence="20">
    <location>
        <begin position="183"/>
        <end position="185"/>
    </location>
</feature>
<feature type="helix" evidence="19">
    <location>
        <begin position="194"/>
        <end position="203"/>
    </location>
</feature>
<feature type="strand" evidence="19">
    <location>
        <begin position="207"/>
        <end position="209"/>
    </location>
</feature>
<feature type="helix" evidence="19">
    <location>
        <begin position="217"/>
        <end position="225"/>
    </location>
</feature>
<feature type="helix" evidence="19">
    <location>
        <begin position="238"/>
        <end position="246"/>
    </location>
</feature>
<feature type="strand" evidence="19">
    <location>
        <begin position="249"/>
        <end position="254"/>
    </location>
</feature>
<feature type="helix" evidence="19">
    <location>
        <begin position="256"/>
        <end position="272"/>
    </location>
</feature>
<feature type="helix" evidence="19">
    <location>
        <begin position="280"/>
        <end position="301"/>
    </location>
</feature>
<feature type="helix" evidence="19">
    <location>
        <begin position="315"/>
        <end position="318"/>
    </location>
</feature>
<feature type="helix" evidence="19">
    <location>
        <begin position="319"/>
        <end position="321"/>
    </location>
</feature>
<accession>A8B2U2</accession>
<accession>O97447</accession>
<name>ALF_GIAIC</name>
<sequence length="323" mass="35214">MPLCTLRQMLGEARKHKYGVGAFNVNNMEQIQGIMKAVVQLKSPVILQCSRGALKYSDMIYLKKLCEAALEKHPDIPICIHLDHGDTLESVKMAIDLGFSSVMIDASHHPFDENVRITKEVVAYAHARGVSVEAELGTLGGIEEDVQNTVQLTEPQDAKKFVELTGVDALAVAIGTSHGAYKFKSESDIRLAIDRVKTISDLTGIPLVMHGSSSVPKDVKDMINKYGGKMPDAVGVPIESIVHAIGEGVCKINVDSDSRMAMTGAIRKVFVEHPEKFDPRDYLGPGRDAITEMLIPKIKAFGSAGHAGDYKVVSLEEAKAWYK</sequence>
<organism evidence="10">
    <name type="scientific">Giardia intestinalis (strain ATCC 50803 / WB clone C6)</name>
    <name type="common">Giardia lamblia</name>
    <dbReference type="NCBI Taxonomy" id="184922"/>
    <lineage>
        <taxon>Eukaryota</taxon>
        <taxon>Metamonada</taxon>
        <taxon>Diplomonadida</taxon>
        <taxon>Hexamitidae</taxon>
        <taxon>Giardiinae</taxon>
        <taxon>Giardia</taxon>
    </lineage>
</organism>
<proteinExistence type="evidence at protein level"/>
<evidence type="ECO:0000269" key="1">
    <source>
    </source>
</evidence>
<evidence type="ECO:0000269" key="2">
    <source>
    </source>
</evidence>
<evidence type="ECO:0000269" key="3">
    <source>
    </source>
</evidence>
<evidence type="ECO:0000269" key="4">
    <source>
    </source>
</evidence>
<evidence type="ECO:0000303" key="5">
    <source>
    </source>
</evidence>
<evidence type="ECO:0000303" key="6">
    <source>
    </source>
</evidence>
<evidence type="ECO:0000305" key="7"/>
<evidence type="ECO:0000305" key="8">
    <source>
    </source>
</evidence>
<evidence type="ECO:0000312" key="9">
    <source>
        <dbReference type="EMBL" id="AAD05239.1"/>
    </source>
</evidence>
<evidence type="ECO:0000312" key="10">
    <source>
        <dbReference type="EMBL" id="EDO82376.1"/>
    </source>
</evidence>
<evidence type="ECO:0000312" key="11">
    <source>
        <dbReference type="EMBL" id="KAE8303045.1"/>
    </source>
</evidence>
<evidence type="ECO:0000312" key="12">
    <source>
        <dbReference type="Proteomes" id="UP000001548"/>
    </source>
</evidence>
<evidence type="ECO:0007744" key="13">
    <source>
        <dbReference type="PDB" id="2ISV"/>
    </source>
</evidence>
<evidence type="ECO:0007744" key="14">
    <source>
        <dbReference type="PDB" id="2ISW"/>
    </source>
</evidence>
<evidence type="ECO:0007744" key="15">
    <source>
        <dbReference type="PDB" id="3GAK"/>
    </source>
</evidence>
<evidence type="ECO:0007744" key="16">
    <source>
        <dbReference type="PDB" id="3GAY"/>
    </source>
</evidence>
<evidence type="ECO:0007744" key="17">
    <source>
        <dbReference type="PDB" id="3GB6"/>
    </source>
</evidence>
<evidence type="ECO:0007744" key="18">
    <source>
        <dbReference type="PDB" id="3OHI"/>
    </source>
</evidence>
<evidence type="ECO:0007829" key="19">
    <source>
        <dbReference type="PDB" id="2ISW"/>
    </source>
</evidence>
<evidence type="ECO:0007829" key="20">
    <source>
        <dbReference type="PDB" id="3GAY"/>
    </source>
</evidence>
<gene>
    <name evidence="6" type="primary">fba</name>
    <name evidence="5" type="synonym">FBPA</name>
    <name evidence="11" type="ORF">GL50803_0011043</name>
</gene>
<reference evidence="9" key="1">
    <citation type="journal article" date="1998" name="Gene">
        <title>Sequence and phylogenetic position of a class II aldolase gene in the amitochondriate protist, Giardia lamblia.</title>
        <authorList>
            <person name="Henze K."/>
            <person name="Morrison H.G."/>
            <person name="Sogin M.L."/>
            <person name="Mueller M."/>
        </authorList>
    </citation>
    <scope>NUCLEOTIDE SEQUENCE [GENOMIC DNA]</scope>
    <source>
        <strain evidence="9">ATCC 50803 / WB clone C6</strain>
    </source>
</reference>
<reference evidence="12" key="2">
    <citation type="journal article" date="2007" name="Science">
        <title>Genomic minimalism in the early diverging intestinal parasite Giardia lamblia.</title>
        <authorList>
            <person name="Morrison H.G."/>
            <person name="McArthur A.G."/>
            <person name="Gillin F.D."/>
            <person name="Aley S.B."/>
            <person name="Adam R.D."/>
            <person name="Olsen G.J."/>
            <person name="Best A.A."/>
            <person name="Cande W.Z."/>
            <person name="Chen F."/>
            <person name="Cipriano M.J."/>
            <person name="Davids B.J."/>
            <person name="Dawson S.C."/>
            <person name="Elmendorf H.G."/>
            <person name="Hehl A.B."/>
            <person name="Holder M.E."/>
            <person name="Huse S.M."/>
            <person name="Kim U.U."/>
            <person name="Lasek-Nesselquist E."/>
            <person name="Manning G."/>
            <person name="Nigam A."/>
            <person name="Nixon J.E.J."/>
            <person name="Palm D."/>
            <person name="Passamaneck N.E."/>
            <person name="Prabhu A."/>
            <person name="Reich C.I."/>
            <person name="Reiner D.S."/>
            <person name="Samuelson J."/>
            <person name="Svard S.G."/>
            <person name="Sogin M.L."/>
        </authorList>
    </citation>
    <scope>NUCLEOTIDE SEQUENCE [LARGE SCALE GENOMIC DNA]</scope>
    <source>
        <strain evidence="12">ATCC 50803 / WB clone C6</strain>
    </source>
</reference>
<reference evidence="11" key="3">
    <citation type="submission" date="2019-07" db="EMBL/GenBank/DDBJ databases">
        <title>New Giardia intestinalis WB genome in near-complete chromosomes.</title>
        <authorList>
            <person name="Xu F."/>
            <person name="Jex A."/>
            <person name="Svard S.G."/>
        </authorList>
    </citation>
    <scope>NUCLEOTIDE SEQUENCE [LARGE SCALE GENOMIC DNA]</scope>
    <source>
        <strain evidence="11">ATCC 50803 / WB clone C6</strain>
    </source>
</reference>
<reference evidence="7" key="4">
    <citation type="journal article" date="2019" name="Sci. Rep.">
        <title>Structure-based identification of a potential non-catalytic binding site for rational drug design in the fructose 1,6-biphosphate aldolase from Giardia lamblia.</title>
        <authorList>
            <person name="Mendez S.T."/>
            <person name="Castillo-Villanueva A."/>
            <person name="Martinez-Mayorga K."/>
            <person name="Reyes-Vivas H."/>
            <person name="Oria-Hernandez J."/>
        </authorList>
    </citation>
    <scope>CATALYTIC ACTIVITY</scope>
    <scope>BIOPHYSICOCHEMICAL PROPERTIES</scope>
    <scope>MUTAGENESIS OF ARG-259 AND ASP-278</scope>
</reference>
<reference evidence="13 14" key="5">
    <citation type="journal article" date="2007" name="J. Biol. Chem.">
        <title>Characterization, kinetics, and crystal structures of fructose-1,6-bisphosphate aldolase from the human parasite, Giardia lamblia.</title>
        <authorList>
            <person name="Galkin A."/>
            <person name="Kulakova L."/>
            <person name="Melamud E."/>
            <person name="Li L."/>
            <person name="Wu C."/>
            <person name="Mariano P."/>
            <person name="Dunaway-Mariano D."/>
            <person name="Nash T.E."/>
            <person name="Herzberg O."/>
        </authorList>
    </citation>
    <scope>X-RAY CRYSTALLOGRAPHY (1.75 ANGSTROMS) IN COMPLEX WITH ZINC AND SUBSTRATE TRANSITION STATE ANALOG PHOSPHOGLYCOLOHYDROXAMATE</scope>
    <scope>FUNCTION</scope>
    <scope>CATALYTIC ACTIVITY</scope>
    <scope>COFACTOR</scope>
    <scope>BIOPHYSICOCHEMICAL PROPERTIES</scope>
    <scope>PATHWAY</scope>
    <scope>SUBUNIT</scope>
    <scope>DEVELOPMENTAL STAGE</scope>
    <scope>DISRUPTION PHENOTYPE</scope>
    <scope>ACTIVE SITE</scope>
    <scope>MUTAGENESIS OF ASP-83</scope>
    <source>
        <strain evidence="5">WB clone 1267</strain>
    </source>
</reference>
<reference evidence="15 16 17" key="6">
    <citation type="journal article" date="2009" name="Biochemistry">
        <title>Structural insights into the substrate binding and stereoselectivity of giardia fructose-1,6-bisphosphate aldolase.</title>
        <authorList>
            <person name="Galkin A."/>
            <person name="Li Z."/>
            <person name="Li L."/>
            <person name="Kulakova L."/>
            <person name="Pal L.R."/>
            <person name="Dunaway-Mariano D."/>
            <person name="Herzberg O."/>
        </authorList>
    </citation>
    <scope>X-RAY CRYSTALLOGRAPHY (1.80 ANGSTROMS) OF WILD TYPE AND MUTANT ALA-83 IN COMPLEX WITH ZINC; FRUCTOSE 1,6-BISPHOSPHATE AND SUBSTRATE ANALOG TAGATOSE 1,6-BISPHOSPHATE</scope>
    <scope>FUNCTION</scope>
    <scope>CATALYTIC ACTIVITY</scope>
    <scope>COFACTOR</scope>
    <scope>ACTIVE SITE</scope>
    <scope>MUTAGENESIS OF ASP-255</scope>
</reference>
<reference evidence="18" key="7">
    <citation type="journal article" date="2011" name="J. Inorg. Biochem.">
        <title>Rational design, synthesis and evaluation of first generation inhibitors of the Giardia lamblia fructose-1,6-biphosphate aldolase.</title>
        <authorList>
            <person name="Li Z."/>
            <person name="Liu Z."/>
            <person name="Cho D.W."/>
            <person name="Zou J."/>
            <person name="Gong M."/>
            <person name="Breece R.M."/>
            <person name="Galkin A."/>
            <person name="Li L."/>
            <person name="Zhao H."/>
            <person name="Maestas G.D."/>
            <person name="Tierney D.L."/>
            <person name="Herzberg O."/>
            <person name="Dunaway-Mariano D."/>
            <person name="Mariano P.S."/>
        </authorList>
    </citation>
    <scope>X-RAY CRYSTALLOGRAPHY (2.30 ANGSTROMS) IN COMPLEX WITH ZINC AND INHIBITOR</scope>
    <scope>CATALYTIC ACTIVITY</scope>
    <scope>COFACTOR</scope>
</reference>
<dbReference type="EC" id="4.1.2.13" evidence="1 2 3 4"/>
<dbReference type="EMBL" id="AF079109">
    <property type="protein sequence ID" value="AAD05239.1"/>
    <property type="molecule type" value="Genomic_DNA"/>
</dbReference>
<dbReference type="EMBL" id="AACB02000001">
    <property type="protein sequence ID" value="EDO82376.1"/>
    <property type="molecule type" value="Genomic_DNA"/>
</dbReference>
<dbReference type="EMBL" id="AACB03000003">
    <property type="protein sequence ID" value="KAE8303045.1"/>
    <property type="molecule type" value="Genomic_DNA"/>
</dbReference>
<dbReference type="RefSeq" id="XP_001710050.1">
    <property type="nucleotide sequence ID" value="XM_001709998.1"/>
</dbReference>
<dbReference type="PDB" id="2ISV">
    <property type="method" value="X-ray"/>
    <property type="resolution" value="2.30 A"/>
    <property type="chains" value="A/B=1-323"/>
</dbReference>
<dbReference type="PDB" id="2ISW">
    <property type="method" value="X-ray"/>
    <property type="resolution" value="1.75 A"/>
    <property type="chains" value="A/B=1-323"/>
</dbReference>
<dbReference type="PDB" id="3GAK">
    <property type="method" value="X-ray"/>
    <property type="resolution" value="2.90 A"/>
    <property type="chains" value="A/B=1-323"/>
</dbReference>
<dbReference type="PDB" id="3GAY">
    <property type="method" value="X-ray"/>
    <property type="resolution" value="1.80 A"/>
    <property type="chains" value="A/B=1-323"/>
</dbReference>
<dbReference type="PDB" id="3GB6">
    <property type="method" value="X-ray"/>
    <property type="resolution" value="2.00 A"/>
    <property type="chains" value="A/B=1-323"/>
</dbReference>
<dbReference type="PDB" id="3OHI">
    <property type="method" value="X-ray"/>
    <property type="resolution" value="2.30 A"/>
    <property type="chains" value="A/B=1-323"/>
</dbReference>
<dbReference type="PDBsum" id="2ISV"/>
<dbReference type="PDBsum" id="2ISW"/>
<dbReference type="PDBsum" id="3GAK"/>
<dbReference type="PDBsum" id="3GAY"/>
<dbReference type="PDBsum" id="3GB6"/>
<dbReference type="PDBsum" id="3OHI"/>
<dbReference type="SMR" id="A8B2U2"/>
<dbReference type="FunCoup" id="A8B2U2">
    <property type="interactions" value="71"/>
</dbReference>
<dbReference type="STRING" id="184922.A8B2U2"/>
<dbReference type="ChEMBL" id="CHEMBL1293234"/>
<dbReference type="EnsemblProtists" id="EDO82376">
    <property type="protein sequence ID" value="EDO82376"/>
    <property type="gene ID" value="GL50803_11043"/>
</dbReference>
<dbReference type="GeneID" id="5702976"/>
<dbReference type="KEGG" id="gla:GL50803_0011043"/>
<dbReference type="VEuPathDB" id="GiardiaDB:DHA2_11043"/>
<dbReference type="VEuPathDB" id="GiardiaDB:GL50581_4115"/>
<dbReference type="VEuPathDB" id="GiardiaDB:GL50803_0011043"/>
<dbReference type="VEuPathDB" id="GiardiaDB:GL50803_11043"/>
<dbReference type="VEuPathDB" id="GiardiaDB:QR46_0069"/>
<dbReference type="HOGENOM" id="CLU_040088_0_0_1"/>
<dbReference type="InParanoid" id="A8B2U2"/>
<dbReference type="OMA" id="TCYSAIR"/>
<dbReference type="BRENDA" id="4.1.2.13">
    <property type="organism ID" value="2401"/>
</dbReference>
<dbReference type="UniPathway" id="UPA00109">
    <property type="reaction ID" value="UER00183"/>
</dbReference>
<dbReference type="EvolutionaryTrace" id="A8B2U2"/>
<dbReference type="Proteomes" id="UP000001548">
    <property type="component" value="Chromosome 3"/>
</dbReference>
<dbReference type="GO" id="GO:0004332">
    <property type="term" value="F:fructose-bisphosphate aldolase activity"/>
    <property type="evidence" value="ECO:0007669"/>
    <property type="project" value="UniProtKB-EC"/>
</dbReference>
<dbReference type="GO" id="GO:0008270">
    <property type="term" value="F:zinc ion binding"/>
    <property type="evidence" value="ECO:0007669"/>
    <property type="project" value="InterPro"/>
</dbReference>
<dbReference type="GO" id="GO:0030388">
    <property type="term" value="P:fructose 1,6-bisphosphate metabolic process"/>
    <property type="evidence" value="ECO:0007669"/>
    <property type="project" value="InterPro"/>
</dbReference>
<dbReference type="GO" id="GO:0006096">
    <property type="term" value="P:glycolytic process"/>
    <property type="evidence" value="ECO:0007669"/>
    <property type="project" value="UniProtKB-UniPathway"/>
</dbReference>
<dbReference type="CDD" id="cd00947">
    <property type="entry name" value="TBP_aldolase_IIB"/>
    <property type="match status" value="1"/>
</dbReference>
<dbReference type="FunFam" id="3.20.20.70:FF:000111">
    <property type="entry name" value="Fructose-1,6-bisphosphate aldolase"/>
    <property type="match status" value="1"/>
</dbReference>
<dbReference type="Gene3D" id="3.20.20.70">
    <property type="entry name" value="Aldolase class I"/>
    <property type="match status" value="1"/>
</dbReference>
<dbReference type="InterPro" id="IPR013785">
    <property type="entry name" value="Aldolase_TIM"/>
</dbReference>
<dbReference type="InterPro" id="IPR050246">
    <property type="entry name" value="Class_II_FBP_aldolase"/>
</dbReference>
<dbReference type="InterPro" id="IPR000771">
    <property type="entry name" value="FBA_II"/>
</dbReference>
<dbReference type="InterPro" id="IPR011289">
    <property type="entry name" value="Fruc_bis_ald_class-2"/>
</dbReference>
<dbReference type="NCBIfam" id="TIGR00167">
    <property type="entry name" value="cbbA"/>
    <property type="match status" value="1"/>
</dbReference>
<dbReference type="NCBIfam" id="TIGR01859">
    <property type="entry name" value="fruc_bis_ald"/>
    <property type="match status" value="1"/>
</dbReference>
<dbReference type="PANTHER" id="PTHR30304">
    <property type="entry name" value="D-TAGATOSE-1,6-BISPHOSPHATE ALDOLASE"/>
    <property type="match status" value="1"/>
</dbReference>
<dbReference type="PANTHER" id="PTHR30304:SF0">
    <property type="entry name" value="D-TAGATOSE-1,6-BISPHOSPHATE ALDOLASE SUBUNIT GATY-RELATED"/>
    <property type="match status" value="1"/>
</dbReference>
<dbReference type="Pfam" id="PF01116">
    <property type="entry name" value="F_bP_aldolase"/>
    <property type="match status" value="1"/>
</dbReference>
<dbReference type="PIRSF" id="PIRSF001359">
    <property type="entry name" value="F_bP_aldolase_II"/>
    <property type="match status" value="1"/>
</dbReference>
<dbReference type="SUPFAM" id="SSF51569">
    <property type="entry name" value="Aldolase"/>
    <property type="match status" value="1"/>
</dbReference>
<dbReference type="PROSITE" id="PS00806">
    <property type="entry name" value="ALDOLASE_CLASS_II_2"/>
    <property type="match status" value="1"/>
</dbReference>